<gene>
    <name evidence="1" type="primary">fabH</name>
    <name type="ordered locus">AZOSEA31030</name>
    <name type="ORF">ebA5455</name>
</gene>
<organism>
    <name type="scientific">Aromatoleum aromaticum (strain DSM 19018 / LMG 30748 / EbN1)</name>
    <name type="common">Azoarcus sp. (strain EbN1)</name>
    <dbReference type="NCBI Taxonomy" id="76114"/>
    <lineage>
        <taxon>Bacteria</taxon>
        <taxon>Pseudomonadati</taxon>
        <taxon>Pseudomonadota</taxon>
        <taxon>Betaproteobacteria</taxon>
        <taxon>Rhodocyclales</taxon>
        <taxon>Rhodocyclaceae</taxon>
        <taxon>Aromatoleum</taxon>
    </lineage>
</organism>
<reference key="1">
    <citation type="journal article" date="2005" name="Arch. Microbiol.">
        <title>The genome sequence of an anaerobic aromatic-degrading denitrifying bacterium, strain EbN1.</title>
        <authorList>
            <person name="Rabus R."/>
            <person name="Kube M."/>
            <person name="Heider J."/>
            <person name="Beck A."/>
            <person name="Heitmann K."/>
            <person name="Widdel F."/>
            <person name="Reinhardt R."/>
        </authorList>
    </citation>
    <scope>NUCLEOTIDE SEQUENCE [LARGE SCALE GENOMIC DNA]</scope>
    <source>
        <strain>DSM 19018 / LMG 30748 / EbN1</strain>
    </source>
</reference>
<comment type="function">
    <text evidence="1">Catalyzes the condensation reaction of fatty acid synthesis by the addition to an acyl acceptor of two carbons from malonyl-ACP. Catalyzes the first condensation reaction which initiates fatty acid synthesis and may therefore play a role in governing the total rate of fatty acid production. Possesses both acetoacetyl-ACP synthase and acetyl transacylase activities. Its substrate specificity determines the biosynthesis of branched-chain and/or straight-chain of fatty acids.</text>
</comment>
<comment type="catalytic activity">
    <reaction evidence="1">
        <text>malonyl-[ACP] + acetyl-CoA + H(+) = 3-oxobutanoyl-[ACP] + CO2 + CoA</text>
        <dbReference type="Rhea" id="RHEA:12080"/>
        <dbReference type="Rhea" id="RHEA-COMP:9623"/>
        <dbReference type="Rhea" id="RHEA-COMP:9625"/>
        <dbReference type="ChEBI" id="CHEBI:15378"/>
        <dbReference type="ChEBI" id="CHEBI:16526"/>
        <dbReference type="ChEBI" id="CHEBI:57287"/>
        <dbReference type="ChEBI" id="CHEBI:57288"/>
        <dbReference type="ChEBI" id="CHEBI:78449"/>
        <dbReference type="ChEBI" id="CHEBI:78450"/>
        <dbReference type="EC" id="2.3.1.180"/>
    </reaction>
</comment>
<comment type="pathway">
    <text evidence="1">Lipid metabolism; fatty acid biosynthesis.</text>
</comment>
<comment type="subunit">
    <text evidence="1">Homodimer.</text>
</comment>
<comment type="subcellular location">
    <subcellularLocation>
        <location evidence="1">Cytoplasm</location>
    </subcellularLocation>
</comment>
<comment type="domain">
    <text evidence="1">The last Arg residue of the ACP-binding site is essential for the weak association between ACP/AcpP and FabH.</text>
</comment>
<comment type="similarity">
    <text evidence="1">Belongs to the thiolase-like superfamily. FabH family.</text>
</comment>
<sequence length="321" mass="33695">MIYARIAGTGSFLPGEPITNDDLVARGIDTSDQWIIERTGIRSRHLASAEMSSSDLAKTASERALDAAGVRPDDIDLIIVATSTPDCIFPSTAALLQSKLGIRNGAAAFDVQAVCSGFVYGLTIAEKFIRSGSHKRALVVGAEVFSRILDWSDRGTCVLFGDGAGAVVLEAAEAPGILASALHADGSHHPILCVPGAVAAGQVVGDPFLRMDGQAVFKFAVRVLGDVALEVLDQAGVTVDSVDWLIPHQANIRILQATARRLGVSMDKVITTVDHHGNTSAASIPLALDLAVRDGRIRPGHRFIIEGVGGGFTWGAALLQF</sequence>
<name>FABH_AROAE</name>
<protein>
    <recommendedName>
        <fullName evidence="1">Beta-ketoacyl-[acyl-carrier-protein] synthase III</fullName>
        <shortName evidence="1">Beta-ketoacyl-ACP synthase III</shortName>
        <shortName evidence="1">KAS III</shortName>
        <ecNumber evidence="1">2.3.1.180</ecNumber>
    </recommendedName>
    <alternativeName>
        <fullName evidence="1">3-oxoacyl-[acyl-carrier-protein] synthase 3</fullName>
    </alternativeName>
    <alternativeName>
        <fullName evidence="1">3-oxoacyl-[acyl-carrier-protein] synthase III</fullName>
    </alternativeName>
</protein>
<evidence type="ECO:0000255" key="1">
    <source>
        <dbReference type="HAMAP-Rule" id="MF_01815"/>
    </source>
</evidence>
<keyword id="KW-0012">Acyltransferase</keyword>
<keyword id="KW-0963">Cytoplasm</keyword>
<keyword id="KW-0275">Fatty acid biosynthesis</keyword>
<keyword id="KW-0276">Fatty acid metabolism</keyword>
<keyword id="KW-0444">Lipid biosynthesis</keyword>
<keyword id="KW-0443">Lipid metabolism</keyword>
<keyword id="KW-0511">Multifunctional enzyme</keyword>
<keyword id="KW-1185">Reference proteome</keyword>
<keyword id="KW-0808">Transferase</keyword>
<proteinExistence type="inferred from homology"/>
<feature type="chain" id="PRO_1000056325" description="Beta-ketoacyl-[acyl-carrier-protein] synthase III">
    <location>
        <begin position="1"/>
        <end position="321"/>
    </location>
</feature>
<feature type="region of interest" description="ACP-binding" evidence="1">
    <location>
        <begin position="249"/>
        <end position="253"/>
    </location>
</feature>
<feature type="active site" evidence="1">
    <location>
        <position position="115"/>
    </location>
</feature>
<feature type="active site" evidence="1">
    <location>
        <position position="248"/>
    </location>
</feature>
<feature type="active site" evidence="1">
    <location>
        <position position="278"/>
    </location>
</feature>
<accession>Q5P0D6</accession>
<dbReference type="EC" id="2.3.1.180" evidence="1"/>
<dbReference type="EMBL" id="CR555306">
    <property type="protein sequence ID" value="CAI09228.1"/>
    <property type="molecule type" value="Genomic_DNA"/>
</dbReference>
<dbReference type="RefSeq" id="WP_011238905.1">
    <property type="nucleotide sequence ID" value="NC_006513.1"/>
</dbReference>
<dbReference type="SMR" id="Q5P0D6"/>
<dbReference type="STRING" id="76114.ebA5455"/>
<dbReference type="KEGG" id="eba:ebA5455"/>
<dbReference type="eggNOG" id="COG0332">
    <property type="taxonomic scope" value="Bacteria"/>
</dbReference>
<dbReference type="HOGENOM" id="CLU_039592_3_1_4"/>
<dbReference type="OrthoDB" id="9815506at2"/>
<dbReference type="UniPathway" id="UPA00094"/>
<dbReference type="Proteomes" id="UP000006552">
    <property type="component" value="Chromosome"/>
</dbReference>
<dbReference type="GO" id="GO:0005737">
    <property type="term" value="C:cytoplasm"/>
    <property type="evidence" value="ECO:0007669"/>
    <property type="project" value="UniProtKB-SubCell"/>
</dbReference>
<dbReference type="GO" id="GO:0004315">
    <property type="term" value="F:3-oxoacyl-[acyl-carrier-protein] synthase activity"/>
    <property type="evidence" value="ECO:0007669"/>
    <property type="project" value="InterPro"/>
</dbReference>
<dbReference type="GO" id="GO:0033818">
    <property type="term" value="F:beta-ketoacyl-acyl-carrier-protein synthase III activity"/>
    <property type="evidence" value="ECO:0007669"/>
    <property type="project" value="UniProtKB-UniRule"/>
</dbReference>
<dbReference type="GO" id="GO:0006633">
    <property type="term" value="P:fatty acid biosynthetic process"/>
    <property type="evidence" value="ECO:0007669"/>
    <property type="project" value="UniProtKB-UniRule"/>
</dbReference>
<dbReference type="CDD" id="cd00830">
    <property type="entry name" value="KAS_III"/>
    <property type="match status" value="1"/>
</dbReference>
<dbReference type="FunFam" id="3.40.47.10:FF:000004">
    <property type="entry name" value="3-oxoacyl-[acyl-carrier-protein] synthase 3"/>
    <property type="match status" value="1"/>
</dbReference>
<dbReference type="Gene3D" id="3.40.47.10">
    <property type="match status" value="1"/>
</dbReference>
<dbReference type="HAMAP" id="MF_01815">
    <property type="entry name" value="FabH"/>
    <property type="match status" value="1"/>
</dbReference>
<dbReference type="InterPro" id="IPR013747">
    <property type="entry name" value="ACP_syn_III_C"/>
</dbReference>
<dbReference type="InterPro" id="IPR013751">
    <property type="entry name" value="ACP_syn_III_N"/>
</dbReference>
<dbReference type="InterPro" id="IPR004655">
    <property type="entry name" value="FabH"/>
</dbReference>
<dbReference type="InterPro" id="IPR016039">
    <property type="entry name" value="Thiolase-like"/>
</dbReference>
<dbReference type="NCBIfam" id="TIGR00747">
    <property type="entry name" value="fabH"/>
    <property type="match status" value="1"/>
</dbReference>
<dbReference type="NCBIfam" id="NF006829">
    <property type="entry name" value="PRK09352.1"/>
    <property type="match status" value="1"/>
</dbReference>
<dbReference type="PANTHER" id="PTHR43091">
    <property type="entry name" value="3-OXOACYL-[ACYL-CARRIER-PROTEIN] SYNTHASE"/>
    <property type="match status" value="1"/>
</dbReference>
<dbReference type="PANTHER" id="PTHR43091:SF1">
    <property type="entry name" value="BETA-KETOACYL-[ACYL-CARRIER-PROTEIN] SYNTHASE III, CHLOROPLASTIC"/>
    <property type="match status" value="1"/>
</dbReference>
<dbReference type="Pfam" id="PF08545">
    <property type="entry name" value="ACP_syn_III"/>
    <property type="match status" value="1"/>
</dbReference>
<dbReference type="Pfam" id="PF08541">
    <property type="entry name" value="ACP_syn_III_C"/>
    <property type="match status" value="1"/>
</dbReference>
<dbReference type="SUPFAM" id="SSF53901">
    <property type="entry name" value="Thiolase-like"/>
    <property type="match status" value="1"/>
</dbReference>